<feature type="chain" id="PRO_0000294412" description="Uncharacterized membrane protein RF_1252">
    <location>
        <begin position="1"/>
        <end position="301"/>
    </location>
</feature>
<feature type="transmembrane region" description="Helical" evidence="1">
    <location>
        <begin position="1"/>
        <end position="21"/>
    </location>
</feature>
<feature type="transmembrane region" description="Helical" evidence="1">
    <location>
        <begin position="33"/>
        <end position="53"/>
    </location>
</feature>
<feature type="transmembrane region" description="Helical" evidence="1">
    <location>
        <begin position="72"/>
        <end position="92"/>
    </location>
</feature>
<feature type="transmembrane region" description="Helical" evidence="1">
    <location>
        <begin position="101"/>
        <end position="121"/>
    </location>
</feature>
<feature type="transmembrane region" description="Helical" evidence="1">
    <location>
        <begin position="124"/>
        <end position="144"/>
    </location>
</feature>
<feature type="transmembrane region" description="Helical" evidence="1">
    <location>
        <begin position="185"/>
        <end position="205"/>
    </location>
</feature>
<feature type="transmembrane region" description="Helical" evidence="1">
    <location>
        <begin position="220"/>
        <end position="240"/>
    </location>
</feature>
<feature type="transmembrane region" description="Helical" evidence="1">
    <location>
        <begin position="246"/>
        <end position="266"/>
    </location>
</feature>
<feature type="transmembrane region" description="Helical" evidence="1">
    <location>
        <begin position="270"/>
        <end position="290"/>
    </location>
</feature>
<sequence length="301" mass="34739">MSWIIFYTVIAALLVLDLGIVHKKNTVMSFKESVLFSLFYFVIACLFGIYFYYNTGAEHAREYYTCFLIEKAMSLDNIFVISIIFQFFKIPGKYQHRVLFFGIIGVIIFRAIMIYGGTILINKFAWLLYIFAVILIATGIKTFYVSHKTFDIQNSYIYKSIVKNLNITPNLEGDKFVVKRNNKLYFTPLFISLVLIEAIDLVFAIDSIPAIFAITNDVYIIYTSNIFAILGLRALFFCLAEIVERFSYIKYSLALILIFIGFKIFIHHYIAIPAYVSLIVTITLLLFGIIASIIRKNMIDH</sequence>
<name>Y1252_RICFE</name>
<gene>
    <name type="ordered locus">RF_1252</name>
</gene>
<proteinExistence type="inferred from homology"/>
<organism>
    <name type="scientific">Rickettsia felis (strain ATCC VR-1525 / URRWXCal2)</name>
    <name type="common">Rickettsia azadi</name>
    <dbReference type="NCBI Taxonomy" id="315456"/>
    <lineage>
        <taxon>Bacteria</taxon>
        <taxon>Pseudomonadati</taxon>
        <taxon>Pseudomonadota</taxon>
        <taxon>Alphaproteobacteria</taxon>
        <taxon>Rickettsiales</taxon>
        <taxon>Rickettsiaceae</taxon>
        <taxon>Rickettsieae</taxon>
        <taxon>Rickettsia</taxon>
        <taxon>spotted fever group</taxon>
    </lineage>
</organism>
<keyword id="KW-1003">Cell membrane</keyword>
<keyword id="KW-0472">Membrane</keyword>
<keyword id="KW-0812">Transmembrane</keyword>
<keyword id="KW-1133">Transmembrane helix</keyword>
<dbReference type="EMBL" id="CP000053">
    <property type="protein sequence ID" value="AAY62103.1"/>
    <property type="status" value="ALT_FRAME"/>
    <property type="molecule type" value="Genomic_DNA"/>
</dbReference>
<dbReference type="STRING" id="315456.RF_1252"/>
<dbReference type="KEGG" id="rfe:RF_1252"/>
<dbReference type="eggNOG" id="COG0861">
    <property type="taxonomic scope" value="Bacteria"/>
</dbReference>
<dbReference type="HOGENOM" id="CLU_045644_1_2_5"/>
<dbReference type="Proteomes" id="UP000008548">
    <property type="component" value="Chromosome"/>
</dbReference>
<dbReference type="GO" id="GO:0005886">
    <property type="term" value="C:plasma membrane"/>
    <property type="evidence" value="ECO:0007669"/>
    <property type="project" value="UniProtKB-SubCell"/>
</dbReference>
<dbReference type="InterPro" id="IPR005496">
    <property type="entry name" value="Integral_membrane_TerC"/>
</dbReference>
<dbReference type="InterPro" id="IPR022369">
    <property type="entry name" value="Integral_membrane_TerC_rswitch"/>
</dbReference>
<dbReference type="NCBIfam" id="TIGR03718">
    <property type="entry name" value="R_switched_Alx"/>
    <property type="match status" value="1"/>
</dbReference>
<dbReference type="PANTHER" id="PTHR30238">
    <property type="entry name" value="MEMBRANE BOUND PREDICTED REDOX MODULATOR"/>
    <property type="match status" value="1"/>
</dbReference>
<dbReference type="PANTHER" id="PTHR30238:SF0">
    <property type="entry name" value="THYLAKOID MEMBRANE PROTEIN TERC, CHLOROPLASTIC"/>
    <property type="match status" value="1"/>
</dbReference>
<dbReference type="Pfam" id="PF03741">
    <property type="entry name" value="TerC"/>
    <property type="match status" value="1"/>
</dbReference>
<protein>
    <recommendedName>
        <fullName>Uncharacterized membrane protein RF_1252</fullName>
    </recommendedName>
</protein>
<evidence type="ECO:0000255" key="1"/>
<evidence type="ECO:0000305" key="2"/>
<reference key="1">
    <citation type="journal article" date="2005" name="PLoS Biol.">
        <title>The genome sequence of Rickettsia felis identifies the first putative conjugative plasmid in an obligate intracellular parasite.</title>
        <authorList>
            <person name="Ogata H."/>
            <person name="Renesto P."/>
            <person name="Audic S."/>
            <person name="Robert C."/>
            <person name="Blanc G."/>
            <person name="Fournier P.-E."/>
            <person name="Parinello H."/>
            <person name="Claverie J.-M."/>
            <person name="Raoult D."/>
        </authorList>
    </citation>
    <scope>NUCLEOTIDE SEQUENCE [LARGE SCALE GENOMIC DNA]</scope>
    <source>
        <strain>ATCC VR-1525 / URRWXCal2</strain>
    </source>
</reference>
<comment type="subcellular location">
    <subcellularLocation>
        <location evidence="2">Cell membrane</location>
        <topology evidence="2">Multi-pass membrane protein</topology>
    </subcellularLocation>
</comment>
<comment type="similarity">
    <text evidence="2">Belongs to the TerC family.</text>
</comment>
<comment type="sequence caution" evidence="2">
    <conflict type="frameshift">
        <sequence resource="EMBL-CDS" id="AAY62103"/>
    </conflict>
</comment>
<accession>Q4UK32</accession>